<evidence type="ECO:0000269" key="1">
    <source>
    </source>
</evidence>
<evidence type="ECO:0000269" key="2">
    <source>
    </source>
</evidence>
<evidence type="ECO:0000303" key="3">
    <source>
    </source>
</evidence>
<evidence type="ECO:0000305" key="4"/>
<keyword id="KW-0238">DNA-binding</keyword>
<keyword id="KW-1185">Reference proteome</keyword>
<keyword id="KW-0678">Repressor</keyword>
<keyword id="KW-0804">Transcription</keyword>
<keyword id="KW-0805">Transcription regulation</keyword>
<reference key="1">
    <citation type="journal article" date="2000" name="Nature">
        <title>Complete genome sequence of Pseudomonas aeruginosa PAO1, an opportunistic pathogen.</title>
        <authorList>
            <person name="Stover C.K."/>
            <person name="Pham X.-Q.T."/>
            <person name="Erwin A.L."/>
            <person name="Mizoguchi S.D."/>
            <person name="Warrener P."/>
            <person name="Hickey M.J."/>
            <person name="Brinkman F.S.L."/>
            <person name="Hufnagle W.O."/>
            <person name="Kowalik D.J."/>
            <person name="Lagrou M."/>
            <person name="Garber R.L."/>
            <person name="Goltry L."/>
            <person name="Tolentino E."/>
            <person name="Westbrock-Wadman S."/>
            <person name="Yuan Y."/>
            <person name="Brody L.L."/>
            <person name="Coulter S.N."/>
            <person name="Folger K.R."/>
            <person name="Kas A."/>
            <person name="Larbig K."/>
            <person name="Lim R.M."/>
            <person name="Smith K.A."/>
            <person name="Spencer D.H."/>
            <person name="Wong G.K.-S."/>
            <person name="Wu Z."/>
            <person name="Paulsen I.T."/>
            <person name="Reizer J."/>
            <person name="Saier M.H. Jr."/>
            <person name="Hancock R.E.W."/>
            <person name="Lory S."/>
            <person name="Olson M.V."/>
        </authorList>
    </citation>
    <scope>NUCLEOTIDE SEQUENCE [LARGE SCALE GENOMIC DNA]</scope>
    <source>
        <strain>ATCC 15692 / DSM 22644 / CIP 104116 / JCM 14847 / LMG 12228 / 1C / PRS 101 / PAO1</strain>
    </source>
</reference>
<reference key="2">
    <citation type="journal article" date="2009" name="Proc. Natl. Acad. Sci. U.S.A.">
        <title>Arginine racemization by coupled catabolic and anabolic dehydrogenases.</title>
        <authorList>
            <person name="Li C."/>
            <person name="Lu C.D."/>
        </authorList>
    </citation>
    <scope>FUNCTION</scope>
    <scope>INDUCTION</scope>
    <source>
        <strain>ATCC 15692 / DSM 22644 / CIP 104116 / JCM 14847 / LMG 12228 / 1C / PRS 101 / PAO1</strain>
    </source>
</reference>
<reference key="3">
    <citation type="journal article" date="2010" name="Microbiology">
        <title>Regulation of the dauBAR operon and characterization of D-amino acid dehydrogenase DauA in arginine and lysine catabolism of Pseudomonas aeruginosa PAO1.</title>
        <authorList>
            <person name="Li C."/>
            <person name="Yao X."/>
            <person name="Lu C.D."/>
        </authorList>
    </citation>
    <scope>FUNCTION</scope>
    <scope>INDUCTION</scope>
    <source>
        <strain>ATCC 15692 / DSM 22644 / CIP 104116 / JCM 14847 / LMG 12228 / 1C / PRS 101 / PAO1</strain>
    </source>
</reference>
<name>DAUR_PSEAE</name>
<gene>
    <name evidence="3" type="primary">dauR</name>
    <name type="ordered locus">PA3864</name>
</gene>
<dbReference type="EMBL" id="AE004091">
    <property type="protein sequence ID" value="AAG07251.1"/>
    <property type="molecule type" value="Genomic_DNA"/>
</dbReference>
<dbReference type="PIR" id="F83163">
    <property type="entry name" value="F83163"/>
</dbReference>
<dbReference type="RefSeq" id="NP_252553.1">
    <property type="nucleotide sequence ID" value="NC_002516.2"/>
</dbReference>
<dbReference type="RefSeq" id="WP_003113779.1">
    <property type="nucleotide sequence ID" value="NZ_QZGE01000001.1"/>
</dbReference>
<dbReference type="FunCoup" id="Q9HXE2">
    <property type="interactions" value="9"/>
</dbReference>
<dbReference type="STRING" id="208964.PA3864"/>
<dbReference type="PaxDb" id="208964-PA3864"/>
<dbReference type="DNASU" id="879820"/>
<dbReference type="GeneID" id="879820"/>
<dbReference type="KEGG" id="pae:PA3864"/>
<dbReference type="PATRIC" id="fig|208964.12.peg.4046"/>
<dbReference type="PseudoCAP" id="PA3864"/>
<dbReference type="HOGENOM" id="CLU_080179_1_0_6"/>
<dbReference type="InParanoid" id="Q9HXE2"/>
<dbReference type="OrthoDB" id="9796595at2"/>
<dbReference type="PhylomeDB" id="Q9HXE2"/>
<dbReference type="BioCyc" id="PAER208964:G1FZ6-3935-MONOMER"/>
<dbReference type="Proteomes" id="UP000002438">
    <property type="component" value="Chromosome"/>
</dbReference>
<dbReference type="GO" id="GO:0005829">
    <property type="term" value="C:cytosol"/>
    <property type="evidence" value="ECO:0000318"/>
    <property type="project" value="GO_Central"/>
</dbReference>
<dbReference type="GO" id="GO:0003677">
    <property type="term" value="F:DNA binding"/>
    <property type="evidence" value="ECO:0007669"/>
    <property type="project" value="UniProtKB-KW"/>
</dbReference>
<dbReference type="InterPro" id="IPR039446">
    <property type="entry name" value="DauR-like"/>
</dbReference>
<dbReference type="InterPro" id="IPR039445">
    <property type="entry name" value="DauR-like_HTH"/>
</dbReference>
<dbReference type="InterPro" id="IPR013559">
    <property type="entry name" value="YheO"/>
</dbReference>
<dbReference type="PANTHER" id="PTHR35568">
    <property type="entry name" value="TRANSCRIPTIONAL REGULATOR DAUR"/>
    <property type="match status" value="1"/>
</dbReference>
<dbReference type="PANTHER" id="PTHR35568:SF1">
    <property type="entry name" value="TRANSCRIPTIONAL REGULATOR DAUR"/>
    <property type="match status" value="1"/>
</dbReference>
<dbReference type="Pfam" id="PF13309">
    <property type="entry name" value="HTH_22"/>
    <property type="match status" value="1"/>
</dbReference>
<dbReference type="Pfam" id="PF08348">
    <property type="entry name" value="PAS_6"/>
    <property type="match status" value="1"/>
</dbReference>
<sequence>MSPSQDPSLENYRAIADGIATLFFPHAEVVLHDLRSQRVDYIANNLSKREVGDDSALEDMLEGDSDERNIGPYEKLNWDGQKIRSVSTVLRDSAGQPLAVLCINLNISLFESAKAALDLFLSPSKLIPQPDALFRDDWQERINTFLHGWLRQRQLGLNLLTREHKRELVLALHAEGAFKGKSAANYVANVLNMGRATVYKHLKELKEGGD</sequence>
<protein>
    <recommendedName>
        <fullName evidence="3">Transcriptional regulator DauR</fullName>
    </recommendedName>
</protein>
<organism>
    <name type="scientific">Pseudomonas aeruginosa (strain ATCC 15692 / DSM 22644 / CIP 104116 / JCM 14847 / LMG 12228 / 1C / PRS 101 / PAO1)</name>
    <dbReference type="NCBI Taxonomy" id="208964"/>
    <lineage>
        <taxon>Bacteria</taxon>
        <taxon>Pseudomonadati</taxon>
        <taxon>Pseudomonadota</taxon>
        <taxon>Gammaproteobacteria</taxon>
        <taxon>Pseudomonadales</taxon>
        <taxon>Pseudomonadaceae</taxon>
        <taxon>Pseudomonas</taxon>
    </lineage>
</organism>
<proteinExistence type="evidence at transcript level"/>
<accession>Q9HXE2</accession>
<comment type="function">
    <text evidence="1 2">DauR represses the dauBAR operon.</text>
</comment>
<comment type="induction">
    <text evidence="1 2">Induced by growth on D-arginine and D-lysine.</text>
</comment>
<comment type="similarity">
    <text evidence="4">Belongs to the DauR family.</text>
</comment>
<feature type="chain" id="PRO_0000433133" description="Transcriptional regulator DauR">
    <location>
        <begin position="1"/>
        <end position="210"/>
    </location>
</feature>